<dbReference type="EMBL" id="CR954253">
    <property type="protein sequence ID" value="CAI98072.1"/>
    <property type="molecule type" value="Genomic_DNA"/>
</dbReference>
<dbReference type="RefSeq" id="WP_003618694.1">
    <property type="nucleotide sequence ID" value="NZ_JQAV01000005.1"/>
</dbReference>
<dbReference type="SMR" id="Q1G9V2"/>
<dbReference type="STRING" id="390333.Ldb1271"/>
<dbReference type="KEGG" id="ldb:Ldb1271"/>
<dbReference type="PATRIC" id="fig|390333.13.peg.1636"/>
<dbReference type="eggNOG" id="COG4974">
    <property type="taxonomic scope" value="Bacteria"/>
</dbReference>
<dbReference type="HOGENOM" id="CLU_027562_9_0_9"/>
<dbReference type="BioCyc" id="LDEL390333:LDB_RS05420-MONOMER"/>
<dbReference type="Proteomes" id="UP000001259">
    <property type="component" value="Chromosome"/>
</dbReference>
<dbReference type="GO" id="GO:0005737">
    <property type="term" value="C:cytoplasm"/>
    <property type="evidence" value="ECO:0007669"/>
    <property type="project" value="UniProtKB-SubCell"/>
</dbReference>
<dbReference type="GO" id="GO:0003677">
    <property type="term" value="F:DNA binding"/>
    <property type="evidence" value="ECO:0007669"/>
    <property type="project" value="UniProtKB-KW"/>
</dbReference>
<dbReference type="GO" id="GO:0009037">
    <property type="term" value="F:tyrosine-based site-specific recombinase activity"/>
    <property type="evidence" value="ECO:0007669"/>
    <property type="project" value="UniProtKB-UniRule"/>
</dbReference>
<dbReference type="GO" id="GO:0051301">
    <property type="term" value="P:cell division"/>
    <property type="evidence" value="ECO:0007669"/>
    <property type="project" value="UniProtKB-KW"/>
</dbReference>
<dbReference type="GO" id="GO:0007059">
    <property type="term" value="P:chromosome segregation"/>
    <property type="evidence" value="ECO:0007669"/>
    <property type="project" value="UniProtKB-UniRule"/>
</dbReference>
<dbReference type="GO" id="GO:0006313">
    <property type="term" value="P:DNA transposition"/>
    <property type="evidence" value="ECO:0007669"/>
    <property type="project" value="UniProtKB-UniRule"/>
</dbReference>
<dbReference type="CDD" id="cd00798">
    <property type="entry name" value="INT_XerDC_C"/>
    <property type="match status" value="1"/>
</dbReference>
<dbReference type="Gene3D" id="1.10.150.130">
    <property type="match status" value="1"/>
</dbReference>
<dbReference type="Gene3D" id="1.10.443.10">
    <property type="entry name" value="Intergrase catalytic core"/>
    <property type="match status" value="1"/>
</dbReference>
<dbReference type="HAMAP" id="MF_01808">
    <property type="entry name" value="Recomb_XerC_XerD"/>
    <property type="match status" value="1"/>
</dbReference>
<dbReference type="InterPro" id="IPR044068">
    <property type="entry name" value="CB"/>
</dbReference>
<dbReference type="InterPro" id="IPR011010">
    <property type="entry name" value="DNA_brk_join_enz"/>
</dbReference>
<dbReference type="InterPro" id="IPR013762">
    <property type="entry name" value="Integrase-like_cat_sf"/>
</dbReference>
<dbReference type="InterPro" id="IPR002104">
    <property type="entry name" value="Integrase_catalytic"/>
</dbReference>
<dbReference type="InterPro" id="IPR010998">
    <property type="entry name" value="Integrase_recombinase_N"/>
</dbReference>
<dbReference type="InterPro" id="IPR004107">
    <property type="entry name" value="Integrase_SAM-like_N"/>
</dbReference>
<dbReference type="InterPro" id="IPR011931">
    <property type="entry name" value="Recomb_XerC"/>
</dbReference>
<dbReference type="InterPro" id="IPR023009">
    <property type="entry name" value="Tyrosine_recombinase_XerC/XerD"/>
</dbReference>
<dbReference type="InterPro" id="IPR050090">
    <property type="entry name" value="Tyrosine_recombinase_XerCD"/>
</dbReference>
<dbReference type="NCBIfam" id="NF001399">
    <property type="entry name" value="PRK00283.1"/>
    <property type="match status" value="1"/>
</dbReference>
<dbReference type="NCBIfam" id="NF040815">
    <property type="entry name" value="recomb_XerA_Arch"/>
    <property type="match status" value="1"/>
</dbReference>
<dbReference type="NCBIfam" id="TIGR02224">
    <property type="entry name" value="recomb_XerC"/>
    <property type="match status" value="1"/>
</dbReference>
<dbReference type="PANTHER" id="PTHR30349">
    <property type="entry name" value="PHAGE INTEGRASE-RELATED"/>
    <property type="match status" value="1"/>
</dbReference>
<dbReference type="PANTHER" id="PTHR30349:SF77">
    <property type="entry name" value="TYROSINE RECOMBINASE XERC"/>
    <property type="match status" value="1"/>
</dbReference>
<dbReference type="Pfam" id="PF02899">
    <property type="entry name" value="Phage_int_SAM_1"/>
    <property type="match status" value="1"/>
</dbReference>
<dbReference type="Pfam" id="PF00589">
    <property type="entry name" value="Phage_integrase"/>
    <property type="match status" value="1"/>
</dbReference>
<dbReference type="SUPFAM" id="SSF56349">
    <property type="entry name" value="DNA breaking-rejoining enzymes"/>
    <property type="match status" value="1"/>
</dbReference>
<dbReference type="PROSITE" id="PS51900">
    <property type="entry name" value="CB"/>
    <property type="match status" value="1"/>
</dbReference>
<dbReference type="PROSITE" id="PS51898">
    <property type="entry name" value="TYR_RECOMBINASE"/>
    <property type="match status" value="1"/>
</dbReference>
<proteinExistence type="inferred from homology"/>
<keyword id="KW-0131">Cell cycle</keyword>
<keyword id="KW-0132">Cell division</keyword>
<keyword id="KW-0159">Chromosome partition</keyword>
<keyword id="KW-0963">Cytoplasm</keyword>
<keyword id="KW-0229">DNA integration</keyword>
<keyword id="KW-0233">DNA recombination</keyword>
<keyword id="KW-0238">DNA-binding</keyword>
<keyword id="KW-1185">Reference proteome</keyword>
<gene>
    <name evidence="1" type="primary">xerC</name>
    <name type="ordered locus">Ldb1271</name>
</gene>
<comment type="function">
    <text evidence="1">Site-specific tyrosine recombinase, which acts by catalyzing the cutting and rejoining of the recombining DNA molecules. The XerC-XerD complex is essential to convert dimers of the bacterial chromosome into monomers to permit their segregation at cell division. It also contributes to the segregational stability of plasmids.</text>
</comment>
<comment type="subunit">
    <text evidence="1">Forms a cyclic heterotetrameric complex composed of two molecules of XerC and two molecules of XerD.</text>
</comment>
<comment type="subcellular location">
    <subcellularLocation>
        <location evidence="1">Cytoplasm</location>
    </subcellularLocation>
</comment>
<comment type="similarity">
    <text evidence="1">Belongs to the 'phage' integrase family. XerC subfamily.</text>
</comment>
<reference key="1">
    <citation type="journal article" date="2006" name="Proc. Natl. Acad. Sci. U.S.A.">
        <title>The complete genome sequence of Lactobacillus bulgaricus reveals extensive and ongoing reductive evolution.</title>
        <authorList>
            <person name="van de Guchte M."/>
            <person name="Penaud S."/>
            <person name="Grimaldi C."/>
            <person name="Barbe V."/>
            <person name="Bryson K."/>
            <person name="Nicolas P."/>
            <person name="Robert C."/>
            <person name="Oztas S."/>
            <person name="Mangenot S."/>
            <person name="Couloux A."/>
            <person name="Loux V."/>
            <person name="Dervyn R."/>
            <person name="Bossy R."/>
            <person name="Bolotin A."/>
            <person name="Batto J.-M."/>
            <person name="Walunas T."/>
            <person name="Gibrat J.-F."/>
            <person name="Bessieres P."/>
            <person name="Weissenbach J."/>
            <person name="Ehrlich S.D."/>
            <person name="Maguin E."/>
        </authorList>
    </citation>
    <scope>NUCLEOTIDE SEQUENCE [LARGE SCALE GENOMIC DNA]</scope>
    <source>
        <strain>ATCC 11842 / DSM 20081 / BCRC 10696 / JCM 1002 / NBRC 13953 / NCIMB 11778 / NCTC 12712 / WDCM 00102 / Lb 14</strain>
    </source>
</reference>
<name>XERC_LACDA</name>
<organism>
    <name type="scientific">Lactobacillus delbrueckii subsp. bulgaricus (strain ATCC 11842 / DSM 20081 / BCRC 10696 / JCM 1002 / NBRC 13953 / NCIMB 11778 / NCTC 12712 / WDCM 00102 / Lb 14)</name>
    <dbReference type="NCBI Taxonomy" id="390333"/>
    <lineage>
        <taxon>Bacteria</taxon>
        <taxon>Bacillati</taxon>
        <taxon>Bacillota</taxon>
        <taxon>Bacilli</taxon>
        <taxon>Lactobacillales</taxon>
        <taxon>Lactobacillaceae</taxon>
        <taxon>Lactobacillus</taxon>
    </lineage>
</organism>
<feature type="chain" id="PRO_1000070008" description="Tyrosine recombinase XerC">
    <location>
        <begin position="1"/>
        <end position="295"/>
    </location>
</feature>
<feature type="domain" description="Core-binding (CB)" evidence="3">
    <location>
        <begin position="1"/>
        <end position="84"/>
    </location>
</feature>
<feature type="domain" description="Tyr recombinase" evidence="2">
    <location>
        <begin position="105"/>
        <end position="289"/>
    </location>
</feature>
<feature type="active site" evidence="1">
    <location>
        <position position="145"/>
    </location>
</feature>
<feature type="active site" evidence="1">
    <location>
        <position position="169"/>
    </location>
</feature>
<feature type="active site" evidence="1">
    <location>
        <position position="241"/>
    </location>
</feature>
<feature type="active site" evidence="1">
    <location>
        <position position="244"/>
    </location>
</feature>
<feature type="active site" evidence="1">
    <location>
        <position position="267"/>
    </location>
</feature>
<feature type="active site" description="O-(3'-phospho-DNA)-tyrosine intermediate" evidence="1">
    <location>
        <position position="276"/>
    </location>
</feature>
<evidence type="ECO:0000255" key="1">
    <source>
        <dbReference type="HAMAP-Rule" id="MF_01808"/>
    </source>
</evidence>
<evidence type="ECO:0000255" key="2">
    <source>
        <dbReference type="PROSITE-ProRule" id="PRU01246"/>
    </source>
</evidence>
<evidence type="ECO:0000255" key="3">
    <source>
        <dbReference type="PROSITE-ProRule" id="PRU01248"/>
    </source>
</evidence>
<sequence length="295" mass="33681">MTLEEQFLSYLKNERSYSPKTVLAYQKDLAAAKKFWQENGGFPGWDQISRRDLEIYLLATGQKLASSTLSRKLSSLKSFYRFLTRRGLVKADPTVAIQLRRGKKKLPEFFYQDEVGQVIRSLNDGKPLTVRNRAIVALFYATGMRLSELTDLKIKQLDLENGMILVHGKGNKDRYVFFDQESKKYLEEYLQAARPSLLKNEPDTGAVFLNKLGRPISSRGIAKAVQQIFQKAGLTAGAHPHELRHSFATAMLNNGADLRSVQELLGHEDLSTTQIYTHVSMQHLTVEYRQHFPRK</sequence>
<protein>
    <recommendedName>
        <fullName evidence="1">Tyrosine recombinase XerC</fullName>
    </recommendedName>
</protein>
<accession>Q1G9V2</accession>